<name>MOF_ORYSJ</name>
<protein>
    <recommendedName>
        <fullName evidence="4">MEIOTIC F-BOX protein MOF</fullName>
    </recommendedName>
</protein>
<accession>Q7X7A4</accession>
<comment type="function">
    <text evidence="3">Probable component of a SCF (SKP1-CULLIN-F-box protein) E3 ubiquitin-protein ligase complex and may function through the ubiquitin-mediated protein degradation or signaling pathway. Required for male meiotic prophase I progression. Required for telomere bouquet formation, homologous chromosome pairing and for the formation of the synaptonemal complex (SC), which stabilizes initial chromosomal axial associations and promotes crossover formation. Involved in meiotic DNA double-strand break (DSB) end-processing and repair, and is important in the recruitment of DSB repair proteins to the DSB sites.</text>
</comment>
<comment type="pathway">
    <text evidence="6">Protein modification; protein ubiquitination.</text>
</comment>
<comment type="subunit">
    <text evidence="3 6">Part of a SCF (SKP1-CUL1-F-box protein) E3 ubiquitin-protein ligase complex (Probable). Interacts (via F-box domain) directly with SKP1 (PubMed:27436711).</text>
</comment>
<comment type="subcellular location">
    <subcellularLocation>
        <location evidence="3">Nucleus</location>
    </subcellularLocation>
    <subcellularLocation>
        <location evidence="3">Chromosome</location>
    </subcellularLocation>
    <text evidence="3">Localizes to male meiotic chromosomes from leptotene to pachytene during meiotic prophase I.</text>
</comment>
<comment type="tissue specificity">
    <text evidence="3">Highly expressed in the stem, leaf and in the anther during meiosis. Weakly expressed in roots and lemma/palea.</text>
</comment>
<comment type="developmental stage">
    <text evidence="3">Highly expressed in the anther during meiosis and then gradually decreases after meiosis. Predominantly expressed during the cytological substages of meiotic prophase I from leptotene to pachytene peaking in zygotene. From stage 7 to stage 9, detected in both the tapetum and male meiocytes of the anther.</text>
</comment>
<comment type="disruption phenotype">
    <text evidence="3">Plants are female fertile, but male sterile as they are not able to produce tetrads and microspores. No differences compared to the wild-type plant during the vegetative stage. Plants develop normal panicles and floral organs, except for smaller and pale-yellow anthers that fail to produce viable pollen grains. No effect on the differentiation or early mitotic division of germ cells. No meiocytes are detected in 4.5 mm and 5.0 mm long flowers, but in 3.0 mm flowers meiosis appears to initiate normally. At leptotene stage of meiotic prophase I, chromosomes appear normal in male meiocytes and cohesion of sister chromatids is not affected. However, subsequent stages of prohase I are severely impaired. Meiocytes display disrupted telomere bouquet formation, impaired pairing and synapsis of homologous chromosomes, and arrested meiocytes at late prophase I, followed by apoptosis. The transverse filament protein ZEP1, an essential synaptonemal complex (SC)-related protein, is not detected. Although normal, programmed DNA double-strand breaks (DSBs) form, foci of the phosphorylated histone gamma H2AX, a marker for DSBs, persist indicating that many of the DSBs remain unrepaired. The recruitment of COM1 and RAD51C to DSBs is severely compromised in meiocytes indicating that normally formed DSB ends are not processed and repaired.</text>
</comment>
<comment type="similarity">
    <text evidence="5">Belongs to the F-box protein family. FBX subfamily.</text>
</comment>
<feature type="chain" id="PRO_0000442779" description="MEIOTIC F-BOX protein MOF">
    <location>
        <begin position="1"/>
        <end position="475"/>
    </location>
</feature>
<feature type="domain" description="F-box" evidence="1">
    <location>
        <begin position="55"/>
        <end position="91"/>
    </location>
</feature>
<feature type="region of interest" description="Disordered" evidence="2">
    <location>
        <begin position="1"/>
        <end position="58"/>
    </location>
</feature>
<feature type="compositionally biased region" description="Low complexity" evidence="2">
    <location>
        <begin position="22"/>
        <end position="33"/>
    </location>
</feature>
<sequence length="475" mass="53064">MRRERDATQIPENPMEGIPQTAAAAAAAAAAEASEPPRKRARVDGGGGGAGEEEEDRLSDLPDCLLEDILAHLGSRQAVQTSVLSRRWRNLWRGVRVVVIDVGSFRLPGADGDPPRFRLDRIEDFADGVLSPSLHPGAARELDALRMRLDEDAVTTNFQRWIRRALWRRPATVDLYYLPRRSFSWPPAVPLTPVTAVSRLKTLRIFGLRPTVVFGADEFPALEDLHIERCSYAHGTIASPTLKRLALVSPINGCFVREQRLTAPGLTSLRLVLPYSREEGVRVITDAPLTSLVDASITIVDTDPGDPRNRRVNQFKVDFLVAISNLLGRLTSVRNLDLTGLNATALLDNKSQEFPMFPYLTTLLLNECDIGYKYHVLRSILQNAPNLEQLRLHNCKFVGKSRRKAGQTQSKEKTSKCSSSTLSSACSSLKSVEIKHPRGEPSHDLLHEFLKEIPHNQWRKRSIDEETISIELNRK</sequence>
<reference key="1">
    <citation type="journal article" date="2002" name="Nature">
        <title>Sequence and analysis of rice chromosome 4.</title>
        <authorList>
            <person name="Feng Q."/>
            <person name="Zhang Y."/>
            <person name="Hao P."/>
            <person name="Wang S."/>
            <person name="Fu G."/>
            <person name="Huang Y."/>
            <person name="Li Y."/>
            <person name="Zhu J."/>
            <person name="Liu Y."/>
            <person name="Hu X."/>
            <person name="Jia P."/>
            <person name="Zhang Y."/>
            <person name="Zhao Q."/>
            <person name="Ying K."/>
            <person name="Yu S."/>
            <person name="Tang Y."/>
            <person name="Weng Q."/>
            <person name="Zhang L."/>
            <person name="Lu Y."/>
            <person name="Mu J."/>
            <person name="Lu Y."/>
            <person name="Zhang L.S."/>
            <person name="Yu Z."/>
            <person name="Fan D."/>
            <person name="Liu X."/>
            <person name="Lu T."/>
            <person name="Li C."/>
            <person name="Wu Y."/>
            <person name="Sun T."/>
            <person name="Lei H."/>
            <person name="Li T."/>
            <person name="Hu H."/>
            <person name="Guan J."/>
            <person name="Wu M."/>
            <person name="Zhang R."/>
            <person name="Zhou B."/>
            <person name="Chen Z."/>
            <person name="Chen L."/>
            <person name="Jin Z."/>
            <person name="Wang R."/>
            <person name="Yin H."/>
            <person name="Cai Z."/>
            <person name="Ren S."/>
            <person name="Lv G."/>
            <person name="Gu W."/>
            <person name="Zhu G."/>
            <person name="Tu Y."/>
            <person name="Jia J."/>
            <person name="Zhang Y."/>
            <person name="Chen J."/>
            <person name="Kang H."/>
            <person name="Chen X."/>
            <person name="Shao C."/>
            <person name="Sun Y."/>
            <person name="Hu Q."/>
            <person name="Zhang X."/>
            <person name="Zhang W."/>
            <person name="Wang L."/>
            <person name="Ding C."/>
            <person name="Sheng H."/>
            <person name="Gu J."/>
            <person name="Chen S."/>
            <person name="Ni L."/>
            <person name="Zhu F."/>
            <person name="Chen W."/>
            <person name="Lan L."/>
            <person name="Lai Y."/>
            <person name="Cheng Z."/>
            <person name="Gu M."/>
            <person name="Jiang J."/>
            <person name="Li J."/>
            <person name="Hong G."/>
            <person name="Xue Y."/>
            <person name="Han B."/>
        </authorList>
    </citation>
    <scope>NUCLEOTIDE SEQUENCE [LARGE SCALE GENOMIC DNA]</scope>
    <source>
        <strain>cv. Nipponbare</strain>
    </source>
</reference>
<reference key="2">
    <citation type="journal article" date="2005" name="Nature">
        <title>The map-based sequence of the rice genome.</title>
        <authorList>
            <consortium name="International rice genome sequencing project (IRGSP)"/>
        </authorList>
    </citation>
    <scope>NUCLEOTIDE SEQUENCE [LARGE SCALE GENOMIC DNA]</scope>
    <source>
        <strain>cv. Nipponbare</strain>
    </source>
</reference>
<reference key="3">
    <citation type="journal article" date="2008" name="Nucleic Acids Res.">
        <title>The rice annotation project database (RAP-DB): 2008 update.</title>
        <authorList>
            <consortium name="The rice annotation project (RAP)"/>
        </authorList>
    </citation>
    <scope>GENOME REANNOTATION</scope>
    <source>
        <strain>cv. Nipponbare</strain>
    </source>
</reference>
<reference key="4">
    <citation type="journal article" date="2013" name="Rice">
        <title>Improvement of the Oryza sativa Nipponbare reference genome using next generation sequence and optical map data.</title>
        <authorList>
            <person name="Kawahara Y."/>
            <person name="de la Bastide M."/>
            <person name="Hamilton J.P."/>
            <person name="Kanamori H."/>
            <person name="McCombie W.R."/>
            <person name="Ouyang S."/>
            <person name="Schwartz D.C."/>
            <person name="Tanaka T."/>
            <person name="Wu J."/>
            <person name="Zhou S."/>
            <person name="Childs K.L."/>
            <person name="Davidson R.M."/>
            <person name="Lin H."/>
            <person name="Quesada-Ocampo L."/>
            <person name="Vaillancourt B."/>
            <person name="Sakai H."/>
            <person name="Lee S.S."/>
            <person name="Kim J."/>
            <person name="Numa H."/>
            <person name="Itoh T."/>
            <person name="Buell C.R."/>
            <person name="Matsumoto T."/>
        </authorList>
    </citation>
    <scope>GENOME REANNOTATION</scope>
    <source>
        <strain>cv. Nipponbare</strain>
    </source>
</reference>
<reference key="5">
    <citation type="submission" date="2006-10" db="EMBL/GenBank/DDBJ databases">
        <title>Oryza sativa full length cDNA.</title>
        <authorList>
            <consortium name="The rice full-length cDNA consortium"/>
        </authorList>
    </citation>
    <scope>NUCLEOTIDE SEQUENCE [LARGE SCALE MRNA]</scope>
    <source>
        <strain>cv. Nipponbare</strain>
        <tissue evidence="7">Leaf</tissue>
    </source>
</reference>
<reference key="6">
    <citation type="journal article" date="2016" name="Plant Cell">
        <title>MEIOTIC F-BOX is essential for male meiotic DNA double-strand break repair in rice.</title>
        <authorList>
            <person name="He Y."/>
            <person name="Wang C."/>
            <person name="Higgins J.D."/>
            <person name="Yu J."/>
            <person name="Zong J."/>
            <person name="Lu P."/>
            <person name="Zhang D."/>
            <person name="Liang W."/>
        </authorList>
    </citation>
    <scope>FUNCTION</scope>
    <scope>INTERACTION WITH SKP1</scope>
    <scope>SUBCELLULAR LOCATION</scope>
    <scope>TISSUE SPECIFICITY</scope>
    <scope>DEVELOPMENTAL STAGE</scope>
    <scope>DISRUPTION PHENOTYPE</scope>
    <scope>PHYLOGENETIC ANALYSIS</scope>
    <source>
        <strain evidence="4">cv. 9522</strain>
    </source>
</reference>
<proteinExistence type="evidence at protein level"/>
<keyword id="KW-0158">Chromosome</keyword>
<keyword id="KW-0227">DNA damage</keyword>
<keyword id="KW-0234">DNA repair</keyword>
<keyword id="KW-0469">Meiosis</keyword>
<keyword id="KW-0539">Nucleus</keyword>
<keyword id="KW-1185">Reference proteome</keyword>
<keyword id="KW-0833">Ubl conjugation pathway</keyword>
<dbReference type="EMBL" id="AL606653">
    <property type="protein sequence ID" value="CAE04825.2"/>
    <property type="molecule type" value="Genomic_DNA"/>
</dbReference>
<dbReference type="EMBL" id="AL663017">
    <property type="protein sequence ID" value="CAE04361.2"/>
    <property type="molecule type" value="Genomic_DNA"/>
</dbReference>
<dbReference type="EMBL" id="AP008210">
    <property type="protein sequence ID" value="BAH92699.1"/>
    <property type="molecule type" value="Genomic_DNA"/>
</dbReference>
<dbReference type="EMBL" id="AP014960">
    <property type="protein sequence ID" value="BAS89592.1"/>
    <property type="molecule type" value="Genomic_DNA"/>
</dbReference>
<dbReference type="EMBL" id="AK241116">
    <property type="protein sequence ID" value="BAH00958.1"/>
    <property type="molecule type" value="mRNA"/>
</dbReference>
<dbReference type="FunCoup" id="Q7X7A4">
    <property type="interactions" value="128"/>
</dbReference>
<dbReference type="STRING" id="39947.Q7X7A4"/>
<dbReference type="PaxDb" id="39947-Q7X7A4"/>
<dbReference type="EnsemblPlants" id="Os04t0464966-01">
    <property type="protein sequence ID" value="Os04t0464966-01"/>
    <property type="gene ID" value="Os04g0464966"/>
</dbReference>
<dbReference type="Gramene" id="Os04t0464966-01">
    <property type="protein sequence ID" value="Os04t0464966-01"/>
    <property type="gene ID" value="Os04g0464966"/>
</dbReference>
<dbReference type="KEGG" id="dosa:Os04g0464966"/>
<dbReference type="KEGG" id="osa:9266478"/>
<dbReference type="eggNOG" id="ENOG502T11G">
    <property type="taxonomic scope" value="Eukaryota"/>
</dbReference>
<dbReference type="HOGENOM" id="CLU_003068_3_0_1"/>
<dbReference type="InParanoid" id="Q7X7A4"/>
<dbReference type="OMA" id="HIERCSY"/>
<dbReference type="OrthoDB" id="594804at2759"/>
<dbReference type="UniPathway" id="UPA00143"/>
<dbReference type="Proteomes" id="UP000000763">
    <property type="component" value="Chromosome 4"/>
</dbReference>
<dbReference type="Proteomes" id="UP000059680">
    <property type="component" value="Chromosome 4"/>
</dbReference>
<dbReference type="GO" id="GO:0005694">
    <property type="term" value="C:chromosome"/>
    <property type="evidence" value="ECO:0007669"/>
    <property type="project" value="UniProtKB-SubCell"/>
</dbReference>
<dbReference type="GO" id="GO:0005634">
    <property type="term" value="C:nucleus"/>
    <property type="evidence" value="ECO:0007669"/>
    <property type="project" value="UniProtKB-SubCell"/>
</dbReference>
<dbReference type="GO" id="GO:0006281">
    <property type="term" value="P:DNA repair"/>
    <property type="evidence" value="ECO:0007669"/>
    <property type="project" value="UniProtKB-KW"/>
</dbReference>
<dbReference type="GO" id="GO:0051321">
    <property type="term" value="P:meiotic cell cycle"/>
    <property type="evidence" value="ECO:0007669"/>
    <property type="project" value="UniProtKB-KW"/>
</dbReference>
<dbReference type="GO" id="GO:0016567">
    <property type="term" value="P:protein ubiquitination"/>
    <property type="evidence" value="ECO:0007669"/>
    <property type="project" value="UniProtKB-UniPathway"/>
</dbReference>
<dbReference type="CDD" id="cd22160">
    <property type="entry name" value="F-box_AtFBL13-like"/>
    <property type="match status" value="1"/>
</dbReference>
<dbReference type="Gene3D" id="3.80.10.10">
    <property type="entry name" value="Ribonuclease Inhibitor"/>
    <property type="match status" value="1"/>
</dbReference>
<dbReference type="InterPro" id="IPR036047">
    <property type="entry name" value="F-box-like_dom_sf"/>
</dbReference>
<dbReference type="InterPro" id="IPR053781">
    <property type="entry name" value="F-box_AtFBL13-like"/>
</dbReference>
<dbReference type="InterPro" id="IPR001810">
    <property type="entry name" value="F-box_dom"/>
</dbReference>
<dbReference type="InterPro" id="IPR053197">
    <property type="entry name" value="F-box_SCFL_complex_component"/>
</dbReference>
<dbReference type="InterPro" id="IPR032675">
    <property type="entry name" value="LRR_dom_sf"/>
</dbReference>
<dbReference type="PANTHER" id="PTHR34223:SF106">
    <property type="entry name" value="MEIOTIC F-BOX PROTEIN MOF"/>
    <property type="match status" value="1"/>
</dbReference>
<dbReference type="PANTHER" id="PTHR34223">
    <property type="entry name" value="OS11G0201299 PROTEIN"/>
    <property type="match status" value="1"/>
</dbReference>
<dbReference type="Pfam" id="PF00646">
    <property type="entry name" value="F-box"/>
    <property type="match status" value="1"/>
</dbReference>
<dbReference type="SMART" id="SM00256">
    <property type="entry name" value="FBOX"/>
    <property type="match status" value="1"/>
</dbReference>
<dbReference type="SUPFAM" id="SSF81383">
    <property type="entry name" value="F-box domain"/>
    <property type="match status" value="1"/>
</dbReference>
<dbReference type="SUPFAM" id="SSF52047">
    <property type="entry name" value="RNI-like"/>
    <property type="match status" value="1"/>
</dbReference>
<dbReference type="PROSITE" id="PS50181">
    <property type="entry name" value="FBOX"/>
    <property type="match status" value="1"/>
</dbReference>
<organism evidence="9">
    <name type="scientific">Oryza sativa subsp. japonica</name>
    <name type="common">Rice</name>
    <dbReference type="NCBI Taxonomy" id="39947"/>
    <lineage>
        <taxon>Eukaryota</taxon>
        <taxon>Viridiplantae</taxon>
        <taxon>Streptophyta</taxon>
        <taxon>Embryophyta</taxon>
        <taxon>Tracheophyta</taxon>
        <taxon>Spermatophyta</taxon>
        <taxon>Magnoliopsida</taxon>
        <taxon>Liliopsida</taxon>
        <taxon>Poales</taxon>
        <taxon>Poaceae</taxon>
        <taxon>BOP clade</taxon>
        <taxon>Oryzoideae</taxon>
        <taxon>Oryzeae</taxon>
        <taxon>Oryzinae</taxon>
        <taxon>Oryza</taxon>
        <taxon>Oryza sativa</taxon>
    </lineage>
</organism>
<gene>
    <name evidence="4" type="primary">MOF</name>
    <name evidence="8" type="ordered locus">Os04g0464966</name>
    <name evidence="9" type="ORF">OSJNBa0060P14.14</name>
    <name evidence="10" type="ORF">OSJNBb0048E02.5</name>
</gene>
<evidence type="ECO:0000255" key="1">
    <source>
        <dbReference type="PROSITE-ProRule" id="PRU00080"/>
    </source>
</evidence>
<evidence type="ECO:0000256" key="2">
    <source>
        <dbReference type="SAM" id="MobiDB-lite"/>
    </source>
</evidence>
<evidence type="ECO:0000269" key="3">
    <source>
    </source>
</evidence>
<evidence type="ECO:0000303" key="4">
    <source>
    </source>
</evidence>
<evidence type="ECO:0000305" key="5"/>
<evidence type="ECO:0000305" key="6">
    <source>
    </source>
</evidence>
<evidence type="ECO:0000312" key="7">
    <source>
        <dbReference type="EMBL" id="BAH00958.1"/>
    </source>
</evidence>
<evidence type="ECO:0000312" key="8">
    <source>
        <dbReference type="EMBL" id="BAH92699.1"/>
    </source>
</evidence>
<evidence type="ECO:0000312" key="9">
    <source>
        <dbReference type="EMBL" id="CAE04361.2"/>
    </source>
</evidence>
<evidence type="ECO:0000312" key="10">
    <source>
        <dbReference type="EMBL" id="CAE04825.2"/>
    </source>
</evidence>